<gene>
    <name type="primary">fes1</name>
    <name type="ORF">AN6543</name>
</gene>
<name>FES1_EMENI</name>
<sequence>MDPNMNNLLKWGIQNSTATQQTSDSNNNASQAPRSNITPEMLSALFGGPSEADLMKAAMEALRSDEVDLENKLIAFDNFEQLIESIDNANNLEPLGLWTPLVELLKHEEPDMRRMAAWCIGTAVQNNEKAQDKLIVMNAIPTLVSMSTQDPVPAVRKKAVYALSSAVRNYQPGTNELVKHLPGGYASGKVDAADMDTIDMIMDKLRAHPVSSSPPSAA</sequence>
<feature type="chain" id="PRO_0000285394" description="Hsp70 nucleotide exchange factor fes1">
    <location>
        <begin position="1"/>
        <end position="218"/>
    </location>
</feature>
<feature type="repeat" description="ARM 1">
    <location>
        <begin position="26"/>
        <end position="67"/>
    </location>
</feature>
<feature type="repeat" description="ARM 2">
    <location>
        <begin position="86"/>
        <end position="125"/>
    </location>
</feature>
<feature type="repeat" description="ARM 3">
    <location>
        <begin position="128"/>
        <end position="168"/>
    </location>
</feature>
<comment type="function">
    <text evidence="1">Functions as a nucleotide exchange factor (NEF) for Hsp70 chaperones which accelerates the release of ADP. Required for fully efficient Hsp70-mediated folding of proteins (By similarity).</text>
</comment>
<comment type="subcellular location">
    <subcellularLocation>
        <location evidence="1">Cytoplasm</location>
    </subcellularLocation>
</comment>
<comment type="similarity">
    <text evidence="2">Belongs to the FES1 family.</text>
</comment>
<proteinExistence type="inferred from homology"/>
<dbReference type="EMBL" id="AACD01000109">
    <property type="protein sequence ID" value="EAA57883.1"/>
    <property type="molecule type" value="Genomic_DNA"/>
</dbReference>
<dbReference type="EMBL" id="BN001301">
    <property type="protein sequence ID" value="CBF70954.1"/>
    <property type="molecule type" value="Genomic_DNA"/>
</dbReference>
<dbReference type="RefSeq" id="XP_664147.1">
    <property type="nucleotide sequence ID" value="XM_659055.1"/>
</dbReference>
<dbReference type="SMR" id="Q5AYT7"/>
<dbReference type="FunCoup" id="Q5AYT7">
    <property type="interactions" value="195"/>
</dbReference>
<dbReference type="STRING" id="227321.Q5AYT7"/>
<dbReference type="EnsemblFungi" id="CBF70954">
    <property type="protein sequence ID" value="CBF70954"/>
    <property type="gene ID" value="ANIA_06543"/>
</dbReference>
<dbReference type="KEGG" id="ani:ANIA_06543"/>
<dbReference type="VEuPathDB" id="FungiDB:AN6543"/>
<dbReference type="eggNOG" id="KOG2160">
    <property type="taxonomic scope" value="Eukaryota"/>
</dbReference>
<dbReference type="HOGENOM" id="CLU_084507_0_0_1"/>
<dbReference type="InParanoid" id="Q5AYT7"/>
<dbReference type="OMA" id="LKWSVEN"/>
<dbReference type="OrthoDB" id="10250458at2759"/>
<dbReference type="Proteomes" id="UP000000560">
    <property type="component" value="Chromosome I"/>
</dbReference>
<dbReference type="GO" id="GO:0005829">
    <property type="term" value="C:cytosol"/>
    <property type="evidence" value="ECO:0007669"/>
    <property type="project" value="EnsemblFungi"/>
</dbReference>
<dbReference type="GO" id="GO:0005783">
    <property type="term" value="C:endoplasmic reticulum"/>
    <property type="evidence" value="ECO:0000318"/>
    <property type="project" value="GO_Central"/>
</dbReference>
<dbReference type="GO" id="GO:0000774">
    <property type="term" value="F:adenyl-nucleotide exchange factor activity"/>
    <property type="evidence" value="ECO:0000318"/>
    <property type="project" value="GO_Central"/>
</dbReference>
<dbReference type="GO" id="GO:0071629">
    <property type="term" value="P:cytoplasm protein quality control by the ubiquitin-proteasome system"/>
    <property type="evidence" value="ECO:0007669"/>
    <property type="project" value="EnsemblFungi"/>
</dbReference>
<dbReference type="GO" id="GO:0006417">
    <property type="term" value="P:regulation of translation"/>
    <property type="evidence" value="ECO:0007669"/>
    <property type="project" value="UniProtKB-KW"/>
</dbReference>
<dbReference type="FunFam" id="1.25.10.10:FF:000434">
    <property type="entry name" value="Hsp70 nucleotide exchange factor fes1"/>
    <property type="match status" value="1"/>
</dbReference>
<dbReference type="Gene3D" id="1.25.10.10">
    <property type="entry name" value="Leucine-rich Repeat Variant"/>
    <property type="match status" value="1"/>
</dbReference>
<dbReference type="InterPro" id="IPR011989">
    <property type="entry name" value="ARM-like"/>
</dbReference>
<dbReference type="InterPro" id="IPR016024">
    <property type="entry name" value="ARM-type_fold"/>
</dbReference>
<dbReference type="InterPro" id="IPR050693">
    <property type="entry name" value="Hsp70_NEF-Inhibitors"/>
</dbReference>
<dbReference type="InterPro" id="IPR013918">
    <property type="entry name" value="Nucleotide_exch_fac_Fes1"/>
</dbReference>
<dbReference type="PANTHER" id="PTHR19316:SF18">
    <property type="entry name" value="HSP70-BINDING PROTEIN 1"/>
    <property type="match status" value="1"/>
</dbReference>
<dbReference type="PANTHER" id="PTHR19316">
    <property type="entry name" value="PROTEIN FOLDING REGULATOR"/>
    <property type="match status" value="1"/>
</dbReference>
<dbReference type="Pfam" id="PF08609">
    <property type="entry name" value="Fes1"/>
    <property type="match status" value="1"/>
</dbReference>
<dbReference type="Pfam" id="PF13513">
    <property type="entry name" value="HEAT_EZ"/>
    <property type="match status" value="1"/>
</dbReference>
<dbReference type="SUPFAM" id="SSF48371">
    <property type="entry name" value="ARM repeat"/>
    <property type="match status" value="1"/>
</dbReference>
<keyword id="KW-0963">Cytoplasm</keyword>
<keyword id="KW-1185">Reference proteome</keyword>
<keyword id="KW-0677">Repeat</keyword>
<keyword id="KW-0810">Translation regulation</keyword>
<accession>Q5AYT7</accession>
<accession>C8V0S6</accession>
<reference key="1">
    <citation type="journal article" date="2005" name="Nature">
        <title>Sequencing of Aspergillus nidulans and comparative analysis with A. fumigatus and A. oryzae.</title>
        <authorList>
            <person name="Galagan J.E."/>
            <person name="Calvo S.E."/>
            <person name="Cuomo C."/>
            <person name="Ma L.-J."/>
            <person name="Wortman J.R."/>
            <person name="Batzoglou S."/>
            <person name="Lee S.-I."/>
            <person name="Bastuerkmen M."/>
            <person name="Spevak C.C."/>
            <person name="Clutterbuck J."/>
            <person name="Kapitonov V."/>
            <person name="Jurka J."/>
            <person name="Scazzocchio C."/>
            <person name="Farman M.L."/>
            <person name="Butler J."/>
            <person name="Purcell S."/>
            <person name="Harris S."/>
            <person name="Braus G.H."/>
            <person name="Draht O."/>
            <person name="Busch S."/>
            <person name="D'Enfert C."/>
            <person name="Bouchier C."/>
            <person name="Goldman G.H."/>
            <person name="Bell-Pedersen D."/>
            <person name="Griffiths-Jones S."/>
            <person name="Doonan J.H."/>
            <person name="Yu J."/>
            <person name="Vienken K."/>
            <person name="Pain A."/>
            <person name="Freitag M."/>
            <person name="Selker E.U."/>
            <person name="Archer D.B."/>
            <person name="Penalva M.A."/>
            <person name="Oakley B.R."/>
            <person name="Momany M."/>
            <person name="Tanaka T."/>
            <person name="Kumagai T."/>
            <person name="Asai K."/>
            <person name="Machida M."/>
            <person name="Nierman W.C."/>
            <person name="Denning D.W."/>
            <person name="Caddick M.X."/>
            <person name="Hynes M."/>
            <person name="Paoletti M."/>
            <person name="Fischer R."/>
            <person name="Miller B.L."/>
            <person name="Dyer P.S."/>
            <person name="Sachs M.S."/>
            <person name="Osmani S.A."/>
            <person name="Birren B.W."/>
        </authorList>
    </citation>
    <scope>NUCLEOTIDE SEQUENCE [LARGE SCALE GENOMIC DNA]</scope>
    <source>
        <strain>FGSC A4 / ATCC 38163 / CBS 112.46 / NRRL 194 / M139</strain>
    </source>
</reference>
<reference key="2">
    <citation type="journal article" date="2009" name="Fungal Genet. Biol.">
        <title>The 2008 update of the Aspergillus nidulans genome annotation: a community effort.</title>
        <authorList>
            <person name="Wortman J.R."/>
            <person name="Gilsenan J.M."/>
            <person name="Joardar V."/>
            <person name="Deegan J."/>
            <person name="Clutterbuck J."/>
            <person name="Andersen M.R."/>
            <person name="Archer D."/>
            <person name="Bencina M."/>
            <person name="Braus G."/>
            <person name="Coutinho P."/>
            <person name="von Dohren H."/>
            <person name="Doonan J."/>
            <person name="Driessen A.J."/>
            <person name="Durek P."/>
            <person name="Espeso E."/>
            <person name="Fekete E."/>
            <person name="Flipphi M."/>
            <person name="Estrada C.G."/>
            <person name="Geysens S."/>
            <person name="Goldman G."/>
            <person name="de Groot P.W."/>
            <person name="Hansen K."/>
            <person name="Harris S.D."/>
            <person name="Heinekamp T."/>
            <person name="Helmstaedt K."/>
            <person name="Henrissat B."/>
            <person name="Hofmann G."/>
            <person name="Homan T."/>
            <person name="Horio T."/>
            <person name="Horiuchi H."/>
            <person name="James S."/>
            <person name="Jones M."/>
            <person name="Karaffa L."/>
            <person name="Karanyi Z."/>
            <person name="Kato M."/>
            <person name="Keller N."/>
            <person name="Kelly D.E."/>
            <person name="Kiel J.A."/>
            <person name="Kim J.M."/>
            <person name="van der Klei I.J."/>
            <person name="Klis F.M."/>
            <person name="Kovalchuk A."/>
            <person name="Krasevec N."/>
            <person name="Kubicek C.P."/>
            <person name="Liu B."/>
            <person name="Maccabe A."/>
            <person name="Meyer V."/>
            <person name="Mirabito P."/>
            <person name="Miskei M."/>
            <person name="Mos M."/>
            <person name="Mullins J."/>
            <person name="Nelson D.R."/>
            <person name="Nielsen J."/>
            <person name="Oakley B.R."/>
            <person name="Osmani S.A."/>
            <person name="Pakula T."/>
            <person name="Paszewski A."/>
            <person name="Paulsen I."/>
            <person name="Pilsyk S."/>
            <person name="Pocsi I."/>
            <person name="Punt P.J."/>
            <person name="Ram A.F."/>
            <person name="Ren Q."/>
            <person name="Robellet X."/>
            <person name="Robson G."/>
            <person name="Seiboth B."/>
            <person name="van Solingen P."/>
            <person name="Specht T."/>
            <person name="Sun J."/>
            <person name="Taheri-Talesh N."/>
            <person name="Takeshita N."/>
            <person name="Ussery D."/>
            <person name="vanKuyk P.A."/>
            <person name="Visser H."/>
            <person name="van de Vondervoort P.J."/>
            <person name="de Vries R.P."/>
            <person name="Walton J."/>
            <person name="Xiang X."/>
            <person name="Xiong Y."/>
            <person name="Zeng A.P."/>
            <person name="Brandt B.W."/>
            <person name="Cornell M.J."/>
            <person name="van den Hondel C.A."/>
            <person name="Visser J."/>
            <person name="Oliver S.G."/>
            <person name="Turner G."/>
        </authorList>
    </citation>
    <scope>GENOME REANNOTATION</scope>
    <source>
        <strain>FGSC A4 / ATCC 38163 / CBS 112.46 / NRRL 194 / M139</strain>
    </source>
</reference>
<evidence type="ECO:0000250" key="1"/>
<evidence type="ECO:0000305" key="2"/>
<protein>
    <recommendedName>
        <fullName>Hsp70 nucleotide exchange factor fes1</fullName>
    </recommendedName>
</protein>
<organism>
    <name type="scientific">Emericella nidulans (strain FGSC A4 / ATCC 38163 / CBS 112.46 / NRRL 194 / M139)</name>
    <name type="common">Aspergillus nidulans</name>
    <dbReference type="NCBI Taxonomy" id="227321"/>
    <lineage>
        <taxon>Eukaryota</taxon>
        <taxon>Fungi</taxon>
        <taxon>Dikarya</taxon>
        <taxon>Ascomycota</taxon>
        <taxon>Pezizomycotina</taxon>
        <taxon>Eurotiomycetes</taxon>
        <taxon>Eurotiomycetidae</taxon>
        <taxon>Eurotiales</taxon>
        <taxon>Aspergillaceae</taxon>
        <taxon>Aspergillus</taxon>
        <taxon>Aspergillus subgen. Nidulantes</taxon>
    </lineage>
</organism>